<gene>
    <name type="primary">ybjN</name>
    <name type="ordered locus">Z1080</name>
    <name type="ordered locus">ECs0933</name>
</gene>
<keyword id="KW-1185">Reference proteome</keyword>
<protein>
    <recommendedName>
        <fullName>Uncharacterized protein YbjN</fullName>
    </recommendedName>
</protein>
<organism>
    <name type="scientific">Escherichia coli O157:H7</name>
    <dbReference type="NCBI Taxonomy" id="83334"/>
    <lineage>
        <taxon>Bacteria</taxon>
        <taxon>Pseudomonadati</taxon>
        <taxon>Pseudomonadota</taxon>
        <taxon>Gammaproteobacteria</taxon>
        <taxon>Enterobacterales</taxon>
        <taxon>Enterobacteriaceae</taxon>
        <taxon>Escherichia</taxon>
    </lineage>
</organism>
<accession>P0AAY8</accession>
<accession>P75815</accession>
<name>YBJN_ECO57</name>
<dbReference type="EMBL" id="AE005174">
    <property type="protein sequence ID" value="AAG55229.1"/>
    <property type="molecule type" value="Genomic_DNA"/>
</dbReference>
<dbReference type="EMBL" id="BA000007">
    <property type="protein sequence ID" value="BAB34356.1"/>
    <property type="molecule type" value="Genomic_DNA"/>
</dbReference>
<dbReference type="PIR" id="E90745">
    <property type="entry name" value="E90745"/>
</dbReference>
<dbReference type="RefSeq" id="NP_308960.1">
    <property type="nucleotide sequence ID" value="NC_002695.1"/>
</dbReference>
<dbReference type="RefSeq" id="WP_000203025.1">
    <property type="nucleotide sequence ID" value="NZ_VOAI01000006.1"/>
</dbReference>
<dbReference type="SMR" id="P0AAY8"/>
<dbReference type="STRING" id="155864.Z1080"/>
<dbReference type="GeneID" id="917677"/>
<dbReference type="KEGG" id="ece:Z1080"/>
<dbReference type="KEGG" id="ecs:ECs_0933"/>
<dbReference type="PATRIC" id="fig|386585.9.peg.1050"/>
<dbReference type="eggNOG" id="ENOG502ZC96">
    <property type="taxonomic scope" value="Bacteria"/>
</dbReference>
<dbReference type="HOGENOM" id="CLU_115861_0_0_6"/>
<dbReference type="OMA" id="HMQNIDG"/>
<dbReference type="Proteomes" id="UP000000558">
    <property type="component" value="Chromosome"/>
</dbReference>
<dbReference type="Proteomes" id="UP000002519">
    <property type="component" value="Chromosome"/>
</dbReference>
<dbReference type="CDD" id="cd17511">
    <property type="entry name" value="YbjN_AmyR-like"/>
    <property type="match status" value="1"/>
</dbReference>
<dbReference type="InterPro" id="IPR019660">
    <property type="entry name" value="Put_sensory_transdc_reg_YbjN"/>
</dbReference>
<dbReference type="Pfam" id="PF10722">
    <property type="entry name" value="YbjN"/>
    <property type="match status" value="1"/>
</dbReference>
<feature type="chain" id="PRO_0000168744" description="Uncharacterized protein YbjN">
    <location>
        <begin position="1"/>
        <end position="158"/>
    </location>
</feature>
<proteinExistence type="predicted"/>
<sequence>MTSLVVPGLDTLRQWLDDLGMSFFECDNCQALHLPHMQNFDGVFDAKIDLIDNTILFSAMAEVRPSAVLPLAADLSAINASSLTVKAFLDMQDDNLPKLVVCQSLSVMQGVTYEQFAWFVRQSEEQISMVILEANAHQLLLPTDDEGQNNVTENYFLH</sequence>
<reference key="1">
    <citation type="journal article" date="2001" name="Nature">
        <title>Genome sequence of enterohaemorrhagic Escherichia coli O157:H7.</title>
        <authorList>
            <person name="Perna N.T."/>
            <person name="Plunkett G. III"/>
            <person name="Burland V."/>
            <person name="Mau B."/>
            <person name="Glasner J.D."/>
            <person name="Rose D.J."/>
            <person name="Mayhew G.F."/>
            <person name="Evans P.S."/>
            <person name="Gregor J."/>
            <person name="Kirkpatrick H.A."/>
            <person name="Posfai G."/>
            <person name="Hackett J."/>
            <person name="Klink S."/>
            <person name="Boutin A."/>
            <person name="Shao Y."/>
            <person name="Miller L."/>
            <person name="Grotbeck E.J."/>
            <person name="Davis N.W."/>
            <person name="Lim A."/>
            <person name="Dimalanta E.T."/>
            <person name="Potamousis K."/>
            <person name="Apodaca J."/>
            <person name="Anantharaman T.S."/>
            <person name="Lin J."/>
            <person name="Yen G."/>
            <person name="Schwartz D.C."/>
            <person name="Welch R.A."/>
            <person name="Blattner F.R."/>
        </authorList>
    </citation>
    <scope>NUCLEOTIDE SEQUENCE [LARGE SCALE GENOMIC DNA]</scope>
    <source>
        <strain>O157:H7 / EDL933 / ATCC 700927 / EHEC</strain>
    </source>
</reference>
<reference key="2">
    <citation type="journal article" date="2001" name="DNA Res.">
        <title>Complete genome sequence of enterohemorrhagic Escherichia coli O157:H7 and genomic comparison with a laboratory strain K-12.</title>
        <authorList>
            <person name="Hayashi T."/>
            <person name="Makino K."/>
            <person name="Ohnishi M."/>
            <person name="Kurokawa K."/>
            <person name="Ishii K."/>
            <person name="Yokoyama K."/>
            <person name="Han C.-G."/>
            <person name="Ohtsubo E."/>
            <person name="Nakayama K."/>
            <person name="Murata T."/>
            <person name="Tanaka M."/>
            <person name="Tobe T."/>
            <person name="Iida T."/>
            <person name="Takami H."/>
            <person name="Honda T."/>
            <person name="Sasakawa C."/>
            <person name="Ogasawara N."/>
            <person name="Yasunaga T."/>
            <person name="Kuhara S."/>
            <person name="Shiba T."/>
            <person name="Hattori M."/>
            <person name="Shinagawa H."/>
        </authorList>
    </citation>
    <scope>NUCLEOTIDE SEQUENCE [LARGE SCALE GENOMIC DNA]</scope>
    <source>
        <strain>O157:H7 / Sakai / RIMD 0509952 / EHEC</strain>
    </source>
</reference>